<accession>B6DCV9</accession>
<feature type="signal peptide" evidence="2">
    <location>
        <begin position="1"/>
        <end position="21"/>
    </location>
</feature>
<feature type="propeptide" id="PRO_0000401739" evidence="1">
    <location>
        <begin position="22"/>
        <end position="25"/>
    </location>
</feature>
<feature type="chain" id="PRO_0000401740" description="U6-lycotoxin-Ls1h">
    <location>
        <begin position="26"/>
        <end position="75"/>
    </location>
</feature>
<evidence type="ECO:0000250" key="1"/>
<evidence type="ECO:0000255" key="2"/>
<evidence type="ECO:0000305" key="3"/>
<sequence length="75" mass="8330">MKLLLFTALVLVVISLIEVEAENERACIPLEKECTKTPGNCCSGLKCDCYRRFEQGVAKGIQCWCIGKDVTYKGV</sequence>
<name>TX609_LYCSI</name>
<keyword id="KW-1015">Disulfide bond</keyword>
<keyword id="KW-0964">Secreted</keyword>
<keyword id="KW-0732">Signal</keyword>
<keyword id="KW-0800">Toxin</keyword>
<proteinExistence type="evidence at transcript level"/>
<organism>
    <name type="scientific">Lycosa singoriensis</name>
    <name type="common">Wolf spider</name>
    <name type="synonym">Aranea singoriensis</name>
    <dbReference type="NCBI Taxonomy" id="434756"/>
    <lineage>
        <taxon>Eukaryota</taxon>
        <taxon>Metazoa</taxon>
        <taxon>Ecdysozoa</taxon>
        <taxon>Arthropoda</taxon>
        <taxon>Chelicerata</taxon>
        <taxon>Arachnida</taxon>
        <taxon>Araneae</taxon>
        <taxon>Araneomorphae</taxon>
        <taxon>Entelegynae</taxon>
        <taxon>Lycosoidea</taxon>
        <taxon>Lycosidae</taxon>
        <taxon>Lycosa</taxon>
    </lineage>
</organism>
<comment type="subcellular location">
    <subcellularLocation>
        <location evidence="1">Secreted</location>
    </subcellularLocation>
</comment>
<comment type="tissue specificity">
    <text>Expressed by the venom gland.</text>
</comment>
<comment type="PTM">
    <text evidence="1">Contains 4 disulfide bonds.</text>
</comment>
<comment type="similarity">
    <text evidence="3">Belongs to the neurotoxin 19 (CSTX) family. 06 (U6-Lctx) subfamily.</text>
</comment>
<reference key="1">
    <citation type="journal article" date="2010" name="Zoology">
        <title>Transcriptome analysis of the venom glands of the Chinese wolf spider Lycosa singoriensis.</title>
        <authorList>
            <person name="Zhang Y."/>
            <person name="Chen J."/>
            <person name="Tang X."/>
            <person name="Wang F."/>
            <person name="Jiang L."/>
            <person name="Xiong X."/>
            <person name="Wang M."/>
            <person name="Rong M."/>
            <person name="Liu Z."/>
            <person name="Liang S."/>
        </authorList>
    </citation>
    <scope>NUCLEOTIDE SEQUENCE [LARGE SCALE MRNA]</scope>
    <source>
        <tissue>Venom gland</tissue>
    </source>
</reference>
<protein>
    <recommendedName>
        <fullName>U6-lycotoxin-Ls1h</fullName>
    </recommendedName>
    <alternativeName>
        <fullName>Toxin-like structure LSTX-F9</fullName>
    </alternativeName>
</protein>
<dbReference type="EMBL" id="EU926043">
    <property type="protein sequence ID" value="ACI41375.1"/>
    <property type="molecule type" value="mRNA"/>
</dbReference>
<dbReference type="EMBL" id="FM864047">
    <property type="protein sequence ID" value="CAS03644.1"/>
    <property type="molecule type" value="mRNA"/>
</dbReference>
<dbReference type="SMR" id="B6DCV9"/>
<dbReference type="ArachnoServer" id="AS000981">
    <property type="toxin name" value="U6-lycotoxin-Ls1h"/>
</dbReference>
<dbReference type="GO" id="GO:0005576">
    <property type="term" value="C:extracellular region"/>
    <property type="evidence" value="ECO:0007669"/>
    <property type="project" value="UniProtKB-SubCell"/>
</dbReference>
<dbReference type="GO" id="GO:0090729">
    <property type="term" value="F:toxin activity"/>
    <property type="evidence" value="ECO:0007669"/>
    <property type="project" value="UniProtKB-KW"/>
</dbReference>
<dbReference type="InterPro" id="IPR019553">
    <property type="entry name" value="Spider_toxin_CSTX_knottin"/>
</dbReference>
<dbReference type="Pfam" id="PF10530">
    <property type="entry name" value="Toxin_35"/>
    <property type="match status" value="1"/>
</dbReference>